<reference key="1">
    <citation type="journal article" date="2001" name="Am. J. Bot.">
        <title>Phylogenetic relationships in Pleurothallidinae (Orchidaceae): combined evidence from nuclear and plastid DNA sequences.</title>
        <authorList>
            <person name="Pridgeon A.M."/>
            <person name="Solano R."/>
            <person name="Chase M.W."/>
        </authorList>
    </citation>
    <scope>NUCLEOTIDE SEQUENCE [GENOMIC DNA]</scope>
</reference>
<name>MATK_DRACH</name>
<proteinExistence type="inferred from homology"/>
<evidence type="ECO:0000255" key="1">
    <source>
        <dbReference type="HAMAP-Rule" id="MF_01390"/>
    </source>
</evidence>
<gene>
    <name evidence="1" type="primary">matK</name>
</gene>
<feature type="chain" id="PRO_0000143365" description="Maturase K">
    <location>
        <begin position="1"/>
        <end position="517"/>
    </location>
</feature>
<protein>
    <recommendedName>
        <fullName evidence="1">Maturase K</fullName>
    </recommendedName>
    <alternativeName>
        <fullName evidence="1">Intron maturase</fullName>
    </alternativeName>
</protein>
<dbReference type="EMBL" id="AF265444">
    <property type="protein sequence ID" value="AAL60262.1"/>
    <property type="molecule type" value="Genomic_DNA"/>
</dbReference>
<dbReference type="GO" id="GO:0009507">
    <property type="term" value="C:chloroplast"/>
    <property type="evidence" value="ECO:0007669"/>
    <property type="project" value="UniProtKB-SubCell"/>
</dbReference>
<dbReference type="GO" id="GO:0003723">
    <property type="term" value="F:RNA binding"/>
    <property type="evidence" value="ECO:0007669"/>
    <property type="project" value="UniProtKB-KW"/>
</dbReference>
<dbReference type="GO" id="GO:0006397">
    <property type="term" value="P:mRNA processing"/>
    <property type="evidence" value="ECO:0007669"/>
    <property type="project" value="UniProtKB-KW"/>
</dbReference>
<dbReference type="GO" id="GO:0008380">
    <property type="term" value="P:RNA splicing"/>
    <property type="evidence" value="ECO:0007669"/>
    <property type="project" value="UniProtKB-UniRule"/>
</dbReference>
<dbReference type="GO" id="GO:0008033">
    <property type="term" value="P:tRNA processing"/>
    <property type="evidence" value="ECO:0007669"/>
    <property type="project" value="UniProtKB-KW"/>
</dbReference>
<dbReference type="HAMAP" id="MF_01390">
    <property type="entry name" value="MatK"/>
    <property type="match status" value="1"/>
</dbReference>
<dbReference type="InterPro" id="IPR024937">
    <property type="entry name" value="Domain_X"/>
</dbReference>
<dbReference type="InterPro" id="IPR002866">
    <property type="entry name" value="Maturase_MatK"/>
</dbReference>
<dbReference type="InterPro" id="IPR024942">
    <property type="entry name" value="Maturase_MatK_N"/>
</dbReference>
<dbReference type="PANTHER" id="PTHR34811">
    <property type="entry name" value="MATURASE K"/>
    <property type="match status" value="1"/>
</dbReference>
<dbReference type="PANTHER" id="PTHR34811:SF1">
    <property type="entry name" value="MATURASE K"/>
    <property type="match status" value="1"/>
</dbReference>
<dbReference type="Pfam" id="PF01348">
    <property type="entry name" value="Intron_maturas2"/>
    <property type="match status" value="1"/>
</dbReference>
<dbReference type="Pfam" id="PF01824">
    <property type="entry name" value="MatK_N"/>
    <property type="match status" value="1"/>
</dbReference>
<geneLocation type="chloroplast"/>
<accession>Q8WJV2</accession>
<organism>
    <name type="scientific">Dracula chimaera</name>
    <dbReference type="NCBI Taxonomy" id="125397"/>
    <lineage>
        <taxon>Eukaryota</taxon>
        <taxon>Viridiplantae</taxon>
        <taxon>Streptophyta</taxon>
        <taxon>Embryophyta</taxon>
        <taxon>Tracheophyta</taxon>
        <taxon>Spermatophyta</taxon>
        <taxon>Magnoliopsida</taxon>
        <taxon>Liliopsida</taxon>
        <taxon>Asparagales</taxon>
        <taxon>Orchidaceae</taxon>
        <taxon>Epidendroideae</taxon>
        <taxon>Epidendreae</taxon>
        <taxon>Pleurothallidinae</taxon>
        <taxon>Dracula</taxon>
    </lineage>
</organism>
<keyword id="KW-0150">Chloroplast</keyword>
<keyword id="KW-0507">mRNA processing</keyword>
<keyword id="KW-0934">Plastid</keyword>
<keyword id="KW-0694">RNA-binding</keyword>
<keyword id="KW-0819">tRNA processing</keyword>
<comment type="function">
    <text evidence="1">Usually encoded in the trnK tRNA gene intron. Probably assists in splicing its own and other chloroplast group II introns.</text>
</comment>
<comment type="subcellular location">
    <subcellularLocation>
        <location>Plastid</location>
        <location>Chloroplast</location>
    </subcellularLocation>
</comment>
<comment type="similarity">
    <text evidence="1">Belongs to the intron maturase 2 family. MatK subfamily.</text>
</comment>
<sequence length="517" mass="61600">MYLNGRITRIFRLKKNSFRQQNFLYPLLLQEYIYSLAHYNSFNSLISYEPVEIIGYDNKSSLVLVKRLITRMYQQKSLISSLNDSNQNEFWGHKNSFSSHFSSQMVSEGFGVILEIPFLSRLVSSLEEKRIPKYQNLRSIHSIFPFLEDKLSHLNYVSDLLIPHPIHLEILVQILQCWIKDVPSLHLLRLFFHEYHNLNSLITSKKAIDVFSKRKKRFFWFLHNSYVYECEYLFLFLRKQSSYLRSISSGVFLERTQFYGKIEYLIIRCCNSFQKILWVLKDTFIHYVRYQGKAILASERTLILMNGWKFHLVNFWQSYFHFWVQPYRIHINQLPNYSFSFLGYFSSVRKNPLVVRNQMLENSFLINTLNNKLDTIVPAISLIGSLSKAQFCTVLGHLISKPIWTDLSDSAIRDRFCRICRNLCRYHTGSSKKQVLDRIKYILRLSCARTLARKHKSTVRTFMRRLGSGFLKEFFLEEEQSPSLIFLQKISFILHGLHRERIWYLDIIRINDLVDHS</sequence>